<gene>
    <name type="ordered locus">At5g15760</name>
    <name type="ORF">F14F8_140</name>
</gene>
<proteinExistence type="evidence at transcript level"/>
<comment type="function">
    <text evidence="1">Component of the chloroplast ribosome (chloro-ribosome), a dedicated translation machinery responsible for the synthesis of chloroplast genome-encoded proteins, including proteins of the transcription and translation machinery and components of the photosynthetic apparatus.</text>
</comment>
<comment type="subunit">
    <text evidence="1">Part of the 30S ribosomal subunit.</text>
</comment>
<comment type="subcellular location">
    <subcellularLocation>
        <location evidence="1">Plastid</location>
        <location evidence="1">Chloroplast</location>
    </subcellularLocation>
</comment>
<comment type="similarity">
    <text evidence="4">Belongs to the chloroplast-specific ribosomal protein cS23 family.</text>
</comment>
<dbReference type="EMBL" id="AL391144">
    <property type="protein sequence ID" value="CAC01775.1"/>
    <property type="molecule type" value="Genomic_DNA"/>
</dbReference>
<dbReference type="EMBL" id="CP002688">
    <property type="protein sequence ID" value="AED92202.1"/>
    <property type="molecule type" value="Genomic_DNA"/>
</dbReference>
<dbReference type="EMBL" id="AK117858">
    <property type="protein sequence ID" value="BAC42499.1"/>
    <property type="molecule type" value="mRNA"/>
</dbReference>
<dbReference type="EMBL" id="BT003711">
    <property type="protein sequence ID" value="AAO39939.1"/>
    <property type="molecule type" value="mRNA"/>
</dbReference>
<dbReference type="PIR" id="T51405">
    <property type="entry name" value="T51405"/>
</dbReference>
<dbReference type="RefSeq" id="NP_197080.1">
    <property type="nucleotide sequence ID" value="NM_121581.3"/>
</dbReference>
<dbReference type="SMR" id="Q9LFV0"/>
<dbReference type="BioGRID" id="16708">
    <property type="interactions" value="1"/>
</dbReference>
<dbReference type="FunCoup" id="Q9LFV0">
    <property type="interactions" value="3"/>
</dbReference>
<dbReference type="IntAct" id="Q9LFV0">
    <property type="interactions" value="2"/>
</dbReference>
<dbReference type="STRING" id="3702.Q9LFV0"/>
<dbReference type="PaxDb" id="3702-AT5G15760.1"/>
<dbReference type="ProteomicsDB" id="226705"/>
<dbReference type="EnsemblPlants" id="AT5G15760.1">
    <property type="protein sequence ID" value="AT5G15760.1"/>
    <property type="gene ID" value="AT5G15760"/>
</dbReference>
<dbReference type="GeneID" id="831432"/>
<dbReference type="Gramene" id="AT5G15760.1">
    <property type="protein sequence ID" value="AT5G15760.1"/>
    <property type="gene ID" value="AT5G15760"/>
</dbReference>
<dbReference type="KEGG" id="ath:AT5G15760"/>
<dbReference type="Araport" id="AT5G15760"/>
<dbReference type="TAIR" id="AT5G15760">
    <property type="gene designation" value="PSRP3/2"/>
</dbReference>
<dbReference type="eggNOG" id="ENOG502SDQ9">
    <property type="taxonomic scope" value="Eukaryota"/>
</dbReference>
<dbReference type="HOGENOM" id="CLU_110441_1_0_1"/>
<dbReference type="InParanoid" id="Q9LFV0"/>
<dbReference type="OMA" id="GVALDHM"/>
<dbReference type="OrthoDB" id="1918956at2759"/>
<dbReference type="PhylomeDB" id="Q9LFV0"/>
<dbReference type="PRO" id="PR:Q9LFV0"/>
<dbReference type="Proteomes" id="UP000006548">
    <property type="component" value="Chromosome 5"/>
</dbReference>
<dbReference type="ExpressionAtlas" id="Q9LFV0">
    <property type="expression patterns" value="baseline and differential"/>
</dbReference>
<dbReference type="GO" id="GO:0009507">
    <property type="term" value="C:chloroplast"/>
    <property type="evidence" value="ECO:0007669"/>
    <property type="project" value="UniProtKB-SubCell"/>
</dbReference>
<dbReference type="GO" id="GO:0009536">
    <property type="term" value="C:plastid"/>
    <property type="evidence" value="ECO:0007005"/>
    <property type="project" value="TAIR"/>
</dbReference>
<dbReference type="GO" id="GO:1990904">
    <property type="term" value="C:ribonucleoprotein complex"/>
    <property type="evidence" value="ECO:0007669"/>
    <property type="project" value="UniProtKB-KW"/>
</dbReference>
<dbReference type="GO" id="GO:0005840">
    <property type="term" value="C:ribosome"/>
    <property type="evidence" value="ECO:0007669"/>
    <property type="project" value="UniProtKB-KW"/>
</dbReference>
<dbReference type="GO" id="GO:0003735">
    <property type="term" value="F:structural constituent of ribosome"/>
    <property type="evidence" value="ECO:0007669"/>
    <property type="project" value="InterPro"/>
</dbReference>
<dbReference type="GO" id="GO:0006412">
    <property type="term" value="P:translation"/>
    <property type="evidence" value="ECO:0007669"/>
    <property type="project" value="InterPro"/>
</dbReference>
<dbReference type="Gene3D" id="3.30.390.140">
    <property type="match status" value="1"/>
</dbReference>
<dbReference type="InterPro" id="IPR038447">
    <property type="entry name" value="PSRP-3/Ycf65_sf"/>
</dbReference>
<dbReference type="InterPro" id="IPR006924">
    <property type="entry name" value="Ribosomal_PSRP3/Ycf65"/>
</dbReference>
<dbReference type="PANTHER" id="PTHR35108">
    <property type="entry name" value="30S RIBOSOMAL PROTEIN 3, CHLOROPLASTIC"/>
    <property type="match status" value="1"/>
</dbReference>
<dbReference type="PANTHER" id="PTHR35108:SF12">
    <property type="entry name" value="SMALL RIBOSOMAL SUBUNIT PROTEIN CS23Y"/>
    <property type="match status" value="1"/>
</dbReference>
<dbReference type="Pfam" id="PF04839">
    <property type="entry name" value="PSRP-3_Ycf65"/>
    <property type="match status" value="1"/>
</dbReference>
<feature type="transit peptide" description="Chloroplast" evidence="2">
    <location>
        <begin position="1"/>
        <end status="unknown"/>
    </location>
</feature>
<feature type="chain" id="PRO_0000041523" description="Small ribosomal subunit protein cS23y">
    <location>
        <begin status="unknown"/>
        <end position="183"/>
    </location>
</feature>
<sequence length="183" mass="20468">MAVQANQSASFGFRTASPSQKLSSKPIAHISLSTKLKPSSRPSLSCSTWNQGQIPARHSCINPGIFAYPPSNLTFSHELPESESPPLGKKKMRVLVKPLEKPKVVLKFVWMQKDIGVALDHMIPGFGTIPLSPYYFWPRKDAWEELKTLLESKPWISELHRVFLLNQATDIINLWQSSGGDLS</sequence>
<reference key="1">
    <citation type="journal article" date="2000" name="Nature">
        <title>Sequence and analysis of chromosome 5 of the plant Arabidopsis thaliana.</title>
        <authorList>
            <person name="Tabata S."/>
            <person name="Kaneko T."/>
            <person name="Nakamura Y."/>
            <person name="Kotani H."/>
            <person name="Kato T."/>
            <person name="Asamizu E."/>
            <person name="Miyajima N."/>
            <person name="Sasamoto S."/>
            <person name="Kimura T."/>
            <person name="Hosouchi T."/>
            <person name="Kawashima K."/>
            <person name="Kohara M."/>
            <person name="Matsumoto M."/>
            <person name="Matsuno A."/>
            <person name="Muraki A."/>
            <person name="Nakayama S."/>
            <person name="Nakazaki N."/>
            <person name="Naruo K."/>
            <person name="Okumura S."/>
            <person name="Shinpo S."/>
            <person name="Takeuchi C."/>
            <person name="Wada T."/>
            <person name="Watanabe A."/>
            <person name="Yamada M."/>
            <person name="Yasuda M."/>
            <person name="Sato S."/>
            <person name="de la Bastide M."/>
            <person name="Huang E."/>
            <person name="Spiegel L."/>
            <person name="Gnoj L."/>
            <person name="O'Shaughnessy A."/>
            <person name="Preston R."/>
            <person name="Habermann K."/>
            <person name="Murray J."/>
            <person name="Johnson D."/>
            <person name="Rohlfing T."/>
            <person name="Nelson J."/>
            <person name="Stoneking T."/>
            <person name="Pepin K."/>
            <person name="Spieth J."/>
            <person name="Sekhon M."/>
            <person name="Armstrong J."/>
            <person name="Becker M."/>
            <person name="Belter E."/>
            <person name="Cordum H."/>
            <person name="Cordes M."/>
            <person name="Courtney L."/>
            <person name="Courtney W."/>
            <person name="Dante M."/>
            <person name="Du H."/>
            <person name="Edwards J."/>
            <person name="Fryman J."/>
            <person name="Haakensen B."/>
            <person name="Lamar E."/>
            <person name="Latreille P."/>
            <person name="Leonard S."/>
            <person name="Meyer R."/>
            <person name="Mulvaney E."/>
            <person name="Ozersky P."/>
            <person name="Riley A."/>
            <person name="Strowmatt C."/>
            <person name="Wagner-McPherson C."/>
            <person name="Wollam A."/>
            <person name="Yoakum M."/>
            <person name="Bell M."/>
            <person name="Dedhia N."/>
            <person name="Parnell L."/>
            <person name="Shah R."/>
            <person name="Rodriguez M."/>
            <person name="Hoon See L."/>
            <person name="Vil D."/>
            <person name="Baker J."/>
            <person name="Kirchoff K."/>
            <person name="Toth K."/>
            <person name="King L."/>
            <person name="Bahret A."/>
            <person name="Miller B."/>
            <person name="Marra M.A."/>
            <person name="Martienssen R."/>
            <person name="McCombie W.R."/>
            <person name="Wilson R.K."/>
            <person name="Murphy G."/>
            <person name="Bancroft I."/>
            <person name="Volckaert G."/>
            <person name="Wambutt R."/>
            <person name="Duesterhoeft A."/>
            <person name="Stiekema W."/>
            <person name="Pohl T."/>
            <person name="Entian K.-D."/>
            <person name="Terryn N."/>
            <person name="Hartley N."/>
            <person name="Bent E."/>
            <person name="Johnson S."/>
            <person name="Langham S.-A."/>
            <person name="McCullagh B."/>
            <person name="Robben J."/>
            <person name="Grymonprez B."/>
            <person name="Zimmermann W."/>
            <person name="Ramsperger U."/>
            <person name="Wedler H."/>
            <person name="Balke K."/>
            <person name="Wedler E."/>
            <person name="Peters S."/>
            <person name="van Staveren M."/>
            <person name="Dirkse W."/>
            <person name="Mooijman P."/>
            <person name="Klein Lankhorst R."/>
            <person name="Weitzenegger T."/>
            <person name="Bothe G."/>
            <person name="Rose M."/>
            <person name="Hauf J."/>
            <person name="Berneiser S."/>
            <person name="Hempel S."/>
            <person name="Feldpausch M."/>
            <person name="Lamberth S."/>
            <person name="Villarroel R."/>
            <person name="Gielen J."/>
            <person name="Ardiles W."/>
            <person name="Bents O."/>
            <person name="Lemcke K."/>
            <person name="Kolesov G."/>
            <person name="Mayer K.F.X."/>
            <person name="Rudd S."/>
            <person name="Schoof H."/>
            <person name="Schueller C."/>
            <person name="Zaccaria P."/>
            <person name="Mewes H.-W."/>
            <person name="Bevan M."/>
            <person name="Fransz P.F."/>
        </authorList>
    </citation>
    <scope>NUCLEOTIDE SEQUENCE [LARGE SCALE GENOMIC DNA]</scope>
    <source>
        <strain>cv. Columbia</strain>
    </source>
</reference>
<reference key="2">
    <citation type="journal article" date="2017" name="Plant J.">
        <title>Araport11: a complete reannotation of the Arabidopsis thaliana reference genome.</title>
        <authorList>
            <person name="Cheng C.Y."/>
            <person name="Krishnakumar V."/>
            <person name="Chan A.P."/>
            <person name="Thibaud-Nissen F."/>
            <person name="Schobel S."/>
            <person name="Town C.D."/>
        </authorList>
    </citation>
    <scope>GENOME REANNOTATION</scope>
    <source>
        <strain>cv. Columbia</strain>
    </source>
</reference>
<reference key="3">
    <citation type="journal article" date="2002" name="Science">
        <title>Functional annotation of a full-length Arabidopsis cDNA collection.</title>
        <authorList>
            <person name="Seki M."/>
            <person name="Narusaka M."/>
            <person name="Kamiya A."/>
            <person name="Ishida J."/>
            <person name="Satou M."/>
            <person name="Sakurai T."/>
            <person name="Nakajima M."/>
            <person name="Enju A."/>
            <person name="Akiyama K."/>
            <person name="Oono Y."/>
            <person name="Muramatsu M."/>
            <person name="Hayashizaki Y."/>
            <person name="Kawai J."/>
            <person name="Carninci P."/>
            <person name="Itoh M."/>
            <person name="Ishii Y."/>
            <person name="Arakawa T."/>
            <person name="Shibata K."/>
            <person name="Shinagawa A."/>
            <person name="Shinozaki K."/>
        </authorList>
    </citation>
    <scope>NUCLEOTIDE SEQUENCE [LARGE SCALE MRNA]</scope>
    <source>
        <strain>cv. Columbia</strain>
    </source>
</reference>
<reference key="4">
    <citation type="journal article" date="2003" name="Science">
        <title>Empirical analysis of transcriptional activity in the Arabidopsis genome.</title>
        <authorList>
            <person name="Yamada K."/>
            <person name="Lim J."/>
            <person name="Dale J.M."/>
            <person name="Chen H."/>
            <person name="Shinn P."/>
            <person name="Palm C.J."/>
            <person name="Southwick A.M."/>
            <person name="Wu H.C."/>
            <person name="Kim C.J."/>
            <person name="Nguyen M."/>
            <person name="Pham P.K."/>
            <person name="Cheuk R.F."/>
            <person name="Karlin-Newmann G."/>
            <person name="Liu S.X."/>
            <person name="Lam B."/>
            <person name="Sakano H."/>
            <person name="Wu T."/>
            <person name="Yu G."/>
            <person name="Miranda M."/>
            <person name="Quach H.L."/>
            <person name="Tripp M."/>
            <person name="Chang C.H."/>
            <person name="Lee J.M."/>
            <person name="Toriumi M.J."/>
            <person name="Chan M.M."/>
            <person name="Tang C.C."/>
            <person name="Onodera C.S."/>
            <person name="Deng J.M."/>
            <person name="Akiyama K."/>
            <person name="Ansari Y."/>
            <person name="Arakawa T."/>
            <person name="Banh J."/>
            <person name="Banno F."/>
            <person name="Bowser L."/>
            <person name="Brooks S.Y."/>
            <person name="Carninci P."/>
            <person name="Chao Q."/>
            <person name="Choy N."/>
            <person name="Enju A."/>
            <person name="Goldsmith A.D."/>
            <person name="Gurjal M."/>
            <person name="Hansen N.F."/>
            <person name="Hayashizaki Y."/>
            <person name="Johnson-Hopson C."/>
            <person name="Hsuan V.W."/>
            <person name="Iida K."/>
            <person name="Karnes M."/>
            <person name="Khan S."/>
            <person name="Koesema E."/>
            <person name="Ishida J."/>
            <person name="Jiang P.X."/>
            <person name="Jones T."/>
            <person name="Kawai J."/>
            <person name="Kamiya A."/>
            <person name="Meyers C."/>
            <person name="Nakajima M."/>
            <person name="Narusaka M."/>
            <person name="Seki M."/>
            <person name="Sakurai T."/>
            <person name="Satou M."/>
            <person name="Tamse R."/>
            <person name="Vaysberg M."/>
            <person name="Wallender E.K."/>
            <person name="Wong C."/>
            <person name="Yamamura Y."/>
            <person name="Yuan S."/>
            <person name="Shinozaki K."/>
            <person name="Davis R.W."/>
            <person name="Theologis A."/>
            <person name="Ecker J.R."/>
        </authorList>
    </citation>
    <scope>NUCLEOTIDE SEQUENCE [LARGE SCALE MRNA]</scope>
    <source>
        <strain>cv. Columbia</strain>
    </source>
</reference>
<reference key="5">
    <citation type="journal article" date="2023" name="Plant Cell">
        <title>An updated nomenclature for plant ribosomal protein genes.</title>
        <authorList>
            <person name="Scarpin M.R."/>
            <person name="Busche M."/>
            <person name="Martinez R.E."/>
            <person name="Harper L.C."/>
            <person name="Reiser L."/>
            <person name="Szakonyi D."/>
            <person name="Merchante C."/>
            <person name="Lan T."/>
            <person name="Xiong W."/>
            <person name="Mo B."/>
            <person name="Tang G."/>
            <person name="Chen X."/>
            <person name="Bailey-Serres J."/>
            <person name="Browning K.S."/>
            <person name="Brunkard J.O."/>
        </authorList>
    </citation>
    <scope>NOMENCLATURE</scope>
</reference>
<organism>
    <name type="scientific">Arabidopsis thaliana</name>
    <name type="common">Mouse-ear cress</name>
    <dbReference type="NCBI Taxonomy" id="3702"/>
    <lineage>
        <taxon>Eukaryota</taxon>
        <taxon>Viridiplantae</taxon>
        <taxon>Streptophyta</taxon>
        <taxon>Embryophyta</taxon>
        <taxon>Tracheophyta</taxon>
        <taxon>Spermatophyta</taxon>
        <taxon>Magnoliopsida</taxon>
        <taxon>eudicotyledons</taxon>
        <taxon>Gunneridae</taxon>
        <taxon>Pentapetalae</taxon>
        <taxon>rosids</taxon>
        <taxon>malvids</taxon>
        <taxon>Brassicales</taxon>
        <taxon>Brassicaceae</taxon>
        <taxon>Camelineae</taxon>
        <taxon>Arabidopsis</taxon>
    </lineage>
</organism>
<protein>
    <recommendedName>
        <fullName evidence="3">Small ribosomal subunit protein cS23y</fullName>
    </recommendedName>
    <alternativeName>
        <fullName>30S ribosomal protein 3-2, chloroplastic</fullName>
    </alternativeName>
    <alternativeName>
        <fullName>Plastid-specific 30S ribosomal protein 3-2</fullName>
        <shortName>PSRP-3 2</shortName>
    </alternativeName>
</protein>
<name>RRP32_ARATH</name>
<keyword id="KW-0150">Chloroplast</keyword>
<keyword id="KW-0934">Plastid</keyword>
<keyword id="KW-1185">Reference proteome</keyword>
<keyword id="KW-0687">Ribonucleoprotein</keyword>
<keyword id="KW-0689">Ribosomal protein</keyword>
<keyword id="KW-0809">Transit peptide</keyword>
<accession>Q9LFV0</accession>
<evidence type="ECO:0000250" key="1">
    <source>
        <dbReference type="UniProtKB" id="P82412"/>
    </source>
</evidence>
<evidence type="ECO:0000255" key="2"/>
<evidence type="ECO:0000303" key="3">
    <source>
    </source>
</evidence>
<evidence type="ECO:0000305" key="4"/>